<proteinExistence type="evidence at protein level"/>
<evidence type="ECO:0000250" key="1"/>
<evidence type="ECO:0000250" key="2">
    <source>
        <dbReference type="UniProtKB" id="G5BQH5"/>
    </source>
</evidence>
<evidence type="ECO:0000250" key="3">
    <source>
        <dbReference type="UniProtKB" id="P02647"/>
    </source>
</evidence>
<evidence type="ECO:0000250" key="4">
    <source>
        <dbReference type="UniProtKB" id="P04639"/>
    </source>
</evidence>
<evidence type="ECO:0000255" key="5"/>
<evidence type="ECO:0000269" key="6">
    <source>
    </source>
</evidence>
<evidence type="ECO:0000305" key="7"/>
<comment type="function">
    <text evidence="1">Participates in the reverse transport of cholesterol from tissues to the liver for excretion by promoting cholesterol efflux from tissues and by acting as a cofactor for the lecithin cholesterol acyltransferase (LCAT). As part of the SPAP complex, activates spermatozoa motility (By similarity).</text>
</comment>
<comment type="subunit">
    <text evidence="2 3 4">Homodimer (By similarity). Interacts with APOA1BP and CLU. Component of a sperm activating protein complex (SPAP), consisting of APOA1, an immunoglobulin heavy chain, an immunoglobulin light chain and albumin. Interacts with NDRG1. Interacts with SCGB3A2 (By similarity). Interacts with NAXE and YJEFN3 (By similarity).</text>
</comment>
<comment type="subcellular location">
    <subcellularLocation>
        <location>Secreted</location>
    </subcellularLocation>
</comment>
<comment type="tissue specificity">
    <text>Major protein of plasma HDL, also found in chylomicrons.</text>
</comment>
<comment type="PTM">
    <text evidence="1">Glycosylated.</text>
</comment>
<comment type="PTM">
    <text evidence="1">Palmitoylated.</text>
</comment>
<comment type="PTM">
    <text evidence="1">Phosphorylation sites are present in the extracellular medium.</text>
</comment>
<comment type="mass spectrometry" mass="28018.8" error="0.361" method="Electrospray" evidence="6">
    <molecule>Apolipoprotein A-I</molecule>
</comment>
<comment type="similarity">
    <text evidence="7">Belongs to the apolipoprotein A1/A4/E family.</text>
</comment>
<accession>P0DM91</accession>
<reference key="1">
    <citation type="journal article" date="2012" name="Nature">
        <title>The bonobo genome compared with the chimpanzee and human genomes.</title>
        <authorList>
            <person name="Prufer K."/>
            <person name="Munch K."/>
            <person name="Hellmann I."/>
            <person name="Akagi K."/>
            <person name="Miller J.R."/>
            <person name="Walenz B."/>
            <person name="Koren S."/>
            <person name="Sutton G."/>
            <person name="Kodira C."/>
            <person name="Winer R."/>
            <person name="Knight J.R."/>
            <person name="Mullikin J.C."/>
            <person name="Meader S.J."/>
            <person name="Ponting C.P."/>
            <person name="Lunter G."/>
            <person name="Higashino S."/>
            <person name="Hobolth A."/>
            <person name="Dutheil J."/>
            <person name="Karakoc E."/>
            <person name="Alkan C."/>
            <person name="Sajjadian S."/>
            <person name="Catacchio C.R."/>
            <person name="Ventura M."/>
            <person name="Marques-Bonet T."/>
            <person name="Eichler E.E."/>
            <person name="Andre C."/>
            <person name="Atencia R."/>
            <person name="Mugisha L."/>
            <person name="Junhold J."/>
            <person name="Patterson N."/>
            <person name="Siebauer M."/>
            <person name="Good J.M."/>
            <person name="Fischer A."/>
            <person name="Ptak S.E."/>
            <person name="Lachmann M."/>
            <person name="Symer D.E."/>
            <person name="Mailund T."/>
            <person name="Schierup M.H."/>
            <person name="Andres A.M."/>
            <person name="Kelso J."/>
            <person name="Paabo S."/>
        </authorList>
    </citation>
    <scope>NUCLEOTIDE SEQUENCE [LARGE SCALE GENOMIC DNA]</scope>
</reference>
<reference key="2">
    <citation type="journal article" date="2009" name="Comp. Biochem. Physiol.">
        <title>Mass spectral analyses of the two major apolipoproteins of great ape high density lipoproteins.</title>
        <authorList>
            <person name="Puppione D.L."/>
            <person name="Della Donna L."/>
            <person name="Laganowsky A.D."/>
            <person name="Bassilian S."/>
            <person name="Souda P."/>
            <person name="Ryder O.A."/>
            <person name="Whitelegge J.P."/>
        </authorList>
    </citation>
    <scope>IDENTIFICATION BY MASS SPECTROMETRY</scope>
</reference>
<reference key="3">
    <citation type="unpublished observations" date="2013-10">
        <authorList>
            <person name="Puppione D.L."/>
        </authorList>
    </citation>
    <scope>IDENTIFICATION</scope>
</reference>
<protein>
    <recommendedName>
        <fullName>Apolipoprotein A-I</fullName>
        <shortName>Apo-AI</shortName>
        <shortName>ApoA-I</shortName>
    </recommendedName>
    <alternativeName>
        <fullName>Apolipoprotein A1</fullName>
    </alternativeName>
    <component>
        <recommendedName>
            <fullName>Proapolipoprotein A-I</fullName>
            <shortName>ProapoA-I</shortName>
        </recommendedName>
    </component>
    <component>
        <recommendedName>
            <fullName>Truncated apolipoprotein A-I</fullName>
        </recommendedName>
    </component>
</protein>
<feature type="signal peptide" evidence="5">
    <location>
        <begin position="1"/>
        <end position="18"/>
    </location>
</feature>
<feature type="chain" id="PRO_0000425329" description="Proapolipoprotein A-I">
    <location>
        <begin position="19"/>
        <end position="267"/>
    </location>
</feature>
<feature type="chain" id="PRO_0000424672" description="Apolipoprotein A-I">
    <location>
        <begin position="25"/>
        <end position="267"/>
    </location>
</feature>
<feature type="chain" id="PRO_0000424673" description="Truncated apolipoprotein A-I">
    <location>
        <begin position="25"/>
        <end position="266"/>
    </location>
</feature>
<feature type="repeat" description="1">
    <location>
        <begin position="68"/>
        <end position="89"/>
    </location>
</feature>
<feature type="repeat" description="2">
    <location>
        <begin position="90"/>
        <end position="111"/>
    </location>
</feature>
<feature type="repeat" description="3; half-length">
    <location>
        <begin position="112"/>
        <end position="122"/>
    </location>
</feature>
<feature type="repeat" description="4">
    <location>
        <begin position="123"/>
        <end position="144"/>
    </location>
</feature>
<feature type="repeat" description="5">
    <location>
        <begin position="145"/>
        <end position="166"/>
    </location>
</feature>
<feature type="repeat" description="6">
    <location>
        <begin position="167"/>
        <end position="188"/>
    </location>
</feature>
<feature type="repeat" description="7">
    <location>
        <begin position="189"/>
        <end position="210"/>
    </location>
</feature>
<feature type="repeat" description="8">
    <location>
        <begin position="211"/>
        <end position="232"/>
    </location>
</feature>
<feature type="repeat" description="9; half-length">
    <location>
        <begin position="233"/>
        <end position="243"/>
    </location>
</feature>
<feature type="repeat" description="10">
    <location>
        <begin position="244"/>
        <end position="267"/>
    </location>
</feature>
<feature type="region of interest" description="10 X approximate tandem repeats">
    <location>
        <begin position="68"/>
        <end position="267"/>
    </location>
</feature>
<feature type="modified residue" description="Methionine sulfoxide" evidence="1">
    <location>
        <position position="110"/>
    </location>
</feature>
<feature type="modified residue" description="Methionine sulfoxide" evidence="1">
    <location>
        <position position="136"/>
    </location>
</feature>
<name>APOA1_PANPA</name>
<sequence length="267" mass="30808">MKAAVLTLAVLFLTGSQARHFWQQDEPPQSPWDRVKDLATVYVDVLKDSGRDYVSQFEGSTLGKQLNLKLLDNWDSVTSTFSKLREQLGPVTQEFWDNLEKETEGLRQEMSKDLEEVKAKVQPYLDDFQKKWQEEMELYRQKVEPLRAELQEGARQKLHELQEKLSPLGEEMRDRARAHVDALRTHLAPYSDELRQRLAARLEALKENGGARLAEYHAKATEHLSTLSEKAKPALEDLRQGLLPVLESFKVSFLSALEEYTKKLNTQ</sequence>
<organism>
    <name type="scientific">Pan paniscus</name>
    <name type="common">Pygmy chimpanzee</name>
    <name type="synonym">Bonobo</name>
    <dbReference type="NCBI Taxonomy" id="9597"/>
    <lineage>
        <taxon>Eukaryota</taxon>
        <taxon>Metazoa</taxon>
        <taxon>Chordata</taxon>
        <taxon>Craniata</taxon>
        <taxon>Vertebrata</taxon>
        <taxon>Euteleostomi</taxon>
        <taxon>Mammalia</taxon>
        <taxon>Eutheria</taxon>
        <taxon>Euarchontoglires</taxon>
        <taxon>Primates</taxon>
        <taxon>Haplorrhini</taxon>
        <taxon>Catarrhini</taxon>
        <taxon>Hominidae</taxon>
        <taxon>Pan</taxon>
    </lineage>
</organism>
<keyword id="KW-0153">Cholesterol metabolism</keyword>
<keyword id="KW-0325">Glycoprotein</keyword>
<keyword id="KW-0345">HDL</keyword>
<keyword id="KW-0443">Lipid metabolism</keyword>
<keyword id="KW-0445">Lipid transport</keyword>
<keyword id="KW-0449">Lipoprotein</keyword>
<keyword id="KW-0558">Oxidation</keyword>
<keyword id="KW-0564">Palmitate</keyword>
<keyword id="KW-0597">Phosphoprotein</keyword>
<keyword id="KW-1185">Reference proteome</keyword>
<keyword id="KW-0677">Repeat</keyword>
<keyword id="KW-0964">Secreted</keyword>
<keyword id="KW-0732">Signal</keyword>
<keyword id="KW-0753">Steroid metabolism</keyword>
<keyword id="KW-1207">Sterol metabolism</keyword>
<keyword id="KW-0813">Transport</keyword>
<gene>
    <name type="primary">APOA1</name>
</gene>
<dbReference type="EMBL" id="AJFE01068713">
    <property type="status" value="NOT_ANNOTATED_CDS"/>
    <property type="molecule type" value="Genomic_DNA"/>
</dbReference>
<dbReference type="RefSeq" id="XP_003820129.1">
    <property type="nucleotide sequence ID" value="XM_003820081.6"/>
</dbReference>
<dbReference type="RefSeq" id="XP_003820130.1">
    <property type="nucleotide sequence ID" value="XM_003820082.2"/>
</dbReference>
<dbReference type="BMRB" id="P0DM91"/>
<dbReference type="SMR" id="P0DM91"/>
<dbReference type="STRING" id="9597.ENSPPAP00000007656"/>
<dbReference type="Ensembl" id="ENSPPAT00000030187.1">
    <property type="protein sequence ID" value="ENSPPAP00000007656.1"/>
    <property type="gene ID" value="ENSPPAG00000026972.1"/>
</dbReference>
<dbReference type="GeneID" id="100990511"/>
<dbReference type="KEGG" id="pps:100990511"/>
<dbReference type="CTD" id="335"/>
<dbReference type="eggNOG" id="ENOG502S1XQ">
    <property type="taxonomic scope" value="Eukaryota"/>
</dbReference>
<dbReference type="GeneTree" id="ENSGT00950000182929"/>
<dbReference type="OMA" id="EYVAQFE"/>
<dbReference type="OrthoDB" id="12804at9604"/>
<dbReference type="Proteomes" id="UP000240080">
    <property type="component" value="Chromosome 11"/>
</dbReference>
<dbReference type="Bgee" id="ENSPPAG00000026972">
    <property type="expression patterns" value="Expressed in liver and 6 other cell types or tissues"/>
</dbReference>
<dbReference type="GO" id="GO:0042627">
    <property type="term" value="C:chylomicron"/>
    <property type="evidence" value="ECO:0007669"/>
    <property type="project" value="TreeGrafter"/>
</dbReference>
<dbReference type="GO" id="GO:0030139">
    <property type="term" value="C:endocytic vesicle"/>
    <property type="evidence" value="ECO:0007669"/>
    <property type="project" value="Ensembl"/>
</dbReference>
<dbReference type="GO" id="GO:1903561">
    <property type="term" value="C:extracellular vesicle"/>
    <property type="evidence" value="ECO:0007669"/>
    <property type="project" value="TreeGrafter"/>
</dbReference>
<dbReference type="GO" id="GO:0034362">
    <property type="term" value="C:low-density lipoprotein particle"/>
    <property type="evidence" value="ECO:0007669"/>
    <property type="project" value="TreeGrafter"/>
</dbReference>
<dbReference type="GO" id="GO:0034366">
    <property type="term" value="C:spherical high-density lipoprotein particle"/>
    <property type="evidence" value="ECO:0007669"/>
    <property type="project" value="Ensembl"/>
</dbReference>
<dbReference type="GO" id="GO:0034361">
    <property type="term" value="C:very-low-density lipoprotein particle"/>
    <property type="evidence" value="ECO:0007669"/>
    <property type="project" value="Ensembl"/>
</dbReference>
<dbReference type="GO" id="GO:0001540">
    <property type="term" value="F:amyloid-beta binding"/>
    <property type="evidence" value="ECO:0007669"/>
    <property type="project" value="Ensembl"/>
</dbReference>
<dbReference type="GO" id="GO:0034191">
    <property type="term" value="F:apolipoprotein A-I receptor binding"/>
    <property type="evidence" value="ECO:0007669"/>
    <property type="project" value="Ensembl"/>
</dbReference>
<dbReference type="GO" id="GO:0045499">
    <property type="term" value="F:chemorepellent activity"/>
    <property type="evidence" value="ECO:0007669"/>
    <property type="project" value="Ensembl"/>
</dbReference>
<dbReference type="GO" id="GO:0015485">
    <property type="term" value="F:cholesterol binding"/>
    <property type="evidence" value="ECO:0007669"/>
    <property type="project" value="Ensembl"/>
</dbReference>
<dbReference type="GO" id="GO:0120020">
    <property type="term" value="F:cholesterol transfer activity"/>
    <property type="evidence" value="ECO:0007669"/>
    <property type="project" value="Ensembl"/>
</dbReference>
<dbReference type="GO" id="GO:0019899">
    <property type="term" value="F:enzyme binding"/>
    <property type="evidence" value="ECO:0007669"/>
    <property type="project" value="Ensembl"/>
</dbReference>
<dbReference type="GO" id="GO:0031072">
    <property type="term" value="F:heat shock protein binding"/>
    <property type="evidence" value="ECO:0007669"/>
    <property type="project" value="Ensembl"/>
</dbReference>
<dbReference type="GO" id="GO:0008035">
    <property type="term" value="F:high-density lipoprotein particle binding"/>
    <property type="evidence" value="ECO:0007669"/>
    <property type="project" value="Ensembl"/>
</dbReference>
<dbReference type="GO" id="GO:0070653">
    <property type="term" value="F:high-density lipoprotein particle receptor binding"/>
    <property type="evidence" value="ECO:0007669"/>
    <property type="project" value="Ensembl"/>
</dbReference>
<dbReference type="GO" id="GO:0060228">
    <property type="term" value="F:phosphatidylcholine-sterol O-acyltransferase activator activity"/>
    <property type="evidence" value="ECO:0007669"/>
    <property type="project" value="Ensembl"/>
</dbReference>
<dbReference type="GO" id="GO:0005543">
    <property type="term" value="F:phospholipid binding"/>
    <property type="evidence" value="ECO:0007669"/>
    <property type="project" value="Ensembl"/>
</dbReference>
<dbReference type="GO" id="GO:0042803">
    <property type="term" value="F:protein homodimerization activity"/>
    <property type="evidence" value="ECO:0000250"/>
    <property type="project" value="UniProtKB"/>
</dbReference>
<dbReference type="GO" id="GO:0030325">
    <property type="term" value="P:adrenal gland development"/>
    <property type="evidence" value="ECO:0007669"/>
    <property type="project" value="Ensembl"/>
</dbReference>
<dbReference type="GO" id="GO:0034205">
    <property type="term" value="P:amyloid-beta formation"/>
    <property type="evidence" value="ECO:0007669"/>
    <property type="project" value="Ensembl"/>
</dbReference>
<dbReference type="GO" id="GO:0043534">
    <property type="term" value="P:blood vessel endothelial cell migration"/>
    <property type="evidence" value="ECO:0007669"/>
    <property type="project" value="Ensembl"/>
</dbReference>
<dbReference type="GO" id="GO:0071402">
    <property type="term" value="P:cellular response to lipoprotein particle stimulus"/>
    <property type="evidence" value="ECO:0007669"/>
    <property type="project" value="Ensembl"/>
</dbReference>
<dbReference type="GO" id="GO:0006695">
    <property type="term" value="P:cholesterol biosynthetic process"/>
    <property type="evidence" value="ECO:0007669"/>
    <property type="project" value="Ensembl"/>
</dbReference>
<dbReference type="GO" id="GO:0033344">
    <property type="term" value="P:cholesterol efflux"/>
    <property type="evidence" value="ECO:0007669"/>
    <property type="project" value="Ensembl"/>
</dbReference>
<dbReference type="GO" id="GO:0042632">
    <property type="term" value="P:cholesterol homeostasis"/>
    <property type="evidence" value="ECO:0007669"/>
    <property type="project" value="Ensembl"/>
</dbReference>
<dbReference type="GO" id="GO:0070508">
    <property type="term" value="P:cholesterol import"/>
    <property type="evidence" value="ECO:0007669"/>
    <property type="project" value="Ensembl"/>
</dbReference>
<dbReference type="GO" id="GO:0001935">
    <property type="term" value="P:endothelial cell proliferation"/>
    <property type="evidence" value="ECO:0007669"/>
    <property type="project" value="Ensembl"/>
</dbReference>
<dbReference type="GO" id="GO:0007186">
    <property type="term" value="P:G protein-coupled receptor signaling pathway"/>
    <property type="evidence" value="ECO:0007669"/>
    <property type="project" value="Ensembl"/>
</dbReference>
<dbReference type="GO" id="GO:0008211">
    <property type="term" value="P:glucocorticoid metabolic process"/>
    <property type="evidence" value="ECO:0007669"/>
    <property type="project" value="Ensembl"/>
</dbReference>
<dbReference type="GO" id="GO:0034380">
    <property type="term" value="P:high-density lipoprotein particle assembly"/>
    <property type="evidence" value="ECO:0007669"/>
    <property type="project" value="Ensembl"/>
</dbReference>
<dbReference type="GO" id="GO:0034375">
    <property type="term" value="P:high-density lipoprotein particle remodeling"/>
    <property type="evidence" value="ECO:0007669"/>
    <property type="project" value="Ensembl"/>
</dbReference>
<dbReference type="GO" id="GO:0007229">
    <property type="term" value="P:integrin-mediated signaling pathway"/>
    <property type="evidence" value="ECO:0007669"/>
    <property type="project" value="Ensembl"/>
</dbReference>
<dbReference type="GO" id="GO:0019915">
    <property type="term" value="P:lipid storage"/>
    <property type="evidence" value="ECO:0007669"/>
    <property type="project" value="Ensembl"/>
</dbReference>
<dbReference type="GO" id="GO:0042158">
    <property type="term" value="P:lipoprotein biosynthetic process"/>
    <property type="evidence" value="ECO:0007669"/>
    <property type="project" value="Ensembl"/>
</dbReference>
<dbReference type="GO" id="GO:0060354">
    <property type="term" value="P:negative regulation of cell adhesion molecule production"/>
    <property type="evidence" value="ECO:0007669"/>
    <property type="project" value="Ensembl"/>
</dbReference>
<dbReference type="GO" id="GO:0002719">
    <property type="term" value="P:negative regulation of cytokine production involved in immune response"/>
    <property type="evidence" value="ECO:0007669"/>
    <property type="project" value="Ensembl"/>
</dbReference>
<dbReference type="GO" id="GO:0034115">
    <property type="term" value="P:negative regulation of heterotypic cell-cell adhesion"/>
    <property type="evidence" value="ECO:0007669"/>
    <property type="project" value="Ensembl"/>
</dbReference>
<dbReference type="GO" id="GO:0050728">
    <property type="term" value="P:negative regulation of inflammatory response"/>
    <property type="evidence" value="ECO:0007669"/>
    <property type="project" value="Ensembl"/>
</dbReference>
<dbReference type="GO" id="GO:0032691">
    <property type="term" value="P:negative regulation of interleukin-1 beta production"/>
    <property type="evidence" value="ECO:0007669"/>
    <property type="project" value="Ensembl"/>
</dbReference>
<dbReference type="GO" id="GO:0010804">
    <property type="term" value="P:negative regulation of tumor necrosis factor-mediated signaling pathway"/>
    <property type="evidence" value="ECO:0007669"/>
    <property type="project" value="Ensembl"/>
</dbReference>
<dbReference type="GO" id="GO:0010903">
    <property type="term" value="P:negative regulation of very-low-density lipoprotein particle remodeling"/>
    <property type="evidence" value="ECO:0007669"/>
    <property type="project" value="Ensembl"/>
</dbReference>
<dbReference type="GO" id="GO:0006656">
    <property type="term" value="P:phosphatidylcholine biosynthetic process"/>
    <property type="evidence" value="ECO:0007669"/>
    <property type="project" value="Ensembl"/>
</dbReference>
<dbReference type="GO" id="GO:0033700">
    <property type="term" value="P:phospholipid efflux"/>
    <property type="evidence" value="ECO:0007669"/>
    <property type="project" value="Ensembl"/>
</dbReference>
<dbReference type="GO" id="GO:0055091">
    <property type="term" value="P:phospholipid homeostasis"/>
    <property type="evidence" value="ECO:0007669"/>
    <property type="project" value="Ensembl"/>
</dbReference>
<dbReference type="GO" id="GO:0010875">
    <property type="term" value="P:positive regulation of cholesterol efflux"/>
    <property type="evidence" value="ECO:0000250"/>
    <property type="project" value="UniProtKB"/>
</dbReference>
<dbReference type="GO" id="GO:0090205">
    <property type="term" value="P:positive regulation of cholesterol metabolic process"/>
    <property type="evidence" value="ECO:0007669"/>
    <property type="project" value="Ensembl"/>
</dbReference>
<dbReference type="GO" id="GO:0050766">
    <property type="term" value="P:positive regulation of phagocytosis"/>
    <property type="evidence" value="ECO:0000250"/>
    <property type="project" value="UniProtKB"/>
</dbReference>
<dbReference type="GO" id="GO:1902995">
    <property type="term" value="P:positive regulation of phospholipid efflux"/>
    <property type="evidence" value="ECO:0000250"/>
    <property type="project" value="UniProtKB"/>
</dbReference>
<dbReference type="GO" id="GO:0035025">
    <property type="term" value="P:positive regulation of Rho protein signal transduction"/>
    <property type="evidence" value="ECO:0007669"/>
    <property type="project" value="Ensembl"/>
</dbReference>
<dbReference type="GO" id="GO:0051496">
    <property type="term" value="P:positive regulation of stress fiber assembly"/>
    <property type="evidence" value="ECO:0007669"/>
    <property type="project" value="Ensembl"/>
</dbReference>
<dbReference type="GO" id="GO:1900026">
    <property type="term" value="P:positive regulation of substrate adhesion-dependent cell spreading"/>
    <property type="evidence" value="ECO:0007669"/>
    <property type="project" value="Ensembl"/>
</dbReference>
<dbReference type="GO" id="GO:0050821">
    <property type="term" value="P:protein stabilization"/>
    <property type="evidence" value="ECO:0000250"/>
    <property type="project" value="UniProtKB"/>
</dbReference>
<dbReference type="GO" id="GO:0032489">
    <property type="term" value="P:regulation of Cdc42 protein signal transduction"/>
    <property type="evidence" value="ECO:0007669"/>
    <property type="project" value="Ensembl"/>
</dbReference>
<dbReference type="GO" id="GO:0030300">
    <property type="term" value="P:regulation of intestinal cholesterol absorption"/>
    <property type="evidence" value="ECO:0007669"/>
    <property type="project" value="Ensembl"/>
</dbReference>
<dbReference type="GO" id="GO:0043691">
    <property type="term" value="P:reverse cholesterol transport"/>
    <property type="evidence" value="ECO:0007669"/>
    <property type="project" value="Ensembl"/>
</dbReference>
<dbReference type="GO" id="GO:0070328">
    <property type="term" value="P:triglyceride homeostasis"/>
    <property type="evidence" value="ECO:0007669"/>
    <property type="project" value="Ensembl"/>
</dbReference>
<dbReference type="GO" id="GO:0051180">
    <property type="term" value="P:vitamin transport"/>
    <property type="evidence" value="ECO:0007669"/>
    <property type="project" value="Ensembl"/>
</dbReference>
<dbReference type="FunFam" id="1.20.120.20:FF:000001">
    <property type="entry name" value="Apolipoprotein A-I"/>
    <property type="match status" value="1"/>
</dbReference>
<dbReference type="FunFam" id="1.20.5.20:FF:000001">
    <property type="entry name" value="apolipoprotein A-I"/>
    <property type="match status" value="1"/>
</dbReference>
<dbReference type="Gene3D" id="1.20.5.20">
    <property type="match status" value="1"/>
</dbReference>
<dbReference type="Gene3D" id="6.10.140.380">
    <property type="match status" value="1"/>
</dbReference>
<dbReference type="Gene3D" id="1.20.120.20">
    <property type="entry name" value="Apolipoprotein"/>
    <property type="match status" value="1"/>
</dbReference>
<dbReference type="InterPro" id="IPR000074">
    <property type="entry name" value="ApoA_E"/>
</dbReference>
<dbReference type="InterPro" id="IPR050163">
    <property type="entry name" value="Apolipoprotein_A1/A4/E"/>
</dbReference>
<dbReference type="PANTHER" id="PTHR18976">
    <property type="entry name" value="APOLIPOPROTEIN"/>
    <property type="match status" value="1"/>
</dbReference>
<dbReference type="PANTHER" id="PTHR18976:SF11">
    <property type="entry name" value="APOLIPOPROTEIN A-I"/>
    <property type="match status" value="1"/>
</dbReference>
<dbReference type="Pfam" id="PF01442">
    <property type="entry name" value="Apolipoprotein"/>
    <property type="match status" value="1"/>
</dbReference>
<dbReference type="SUPFAM" id="SSF58113">
    <property type="entry name" value="Apolipoprotein A-I"/>
    <property type="match status" value="1"/>
</dbReference>